<sequence>MKSQSKRTSRLFVFVGVVVAIIIAVLSWRYFGTGSDNNTSGAQQSARGQDTSHGGRRNTPLAPVQAATATEQEVPRYLTGLGTVIAANTVTVTSRVDGELMALHFTEGQQVKAGDLLAEIDPRPYEVQLTQAQGQLAKDQATLDNARRDLARYQKLSKTGLISQQELDTQSSLVRQSEGSVKADQGAIDSAKLQLTYSRITAPISGRVGLKQVDVGNYITSGTATPIVVITQTHPVDVVFTLPESDIPAIIQAQKNAEKTHAIVPVEAWDRTNKQMLAQGYLLSIDNQIDTTTGTIKLKARFNNEDDVLFPNQFVNARIKVDLLQNAVVVPTAAVQMGSEGNFVWTLDDANKVSKHLVTTGIQNSQQVVIDAGLNAGQRVVTDGIDRLTEGVQVEVVTPRSANTDANPASAEKAAAEAEGSTPHQGRGRPANAPARSTTAAEKS</sequence>
<feature type="signal peptide" evidence="1">
    <location>
        <begin position="1"/>
        <end position="20"/>
    </location>
</feature>
<feature type="chain" id="PRO_5000116102" description="Multidrug resistance protein MdtA">
    <location>
        <begin position="21"/>
        <end position="444"/>
    </location>
</feature>
<feature type="region of interest" description="Disordered" evidence="2">
    <location>
        <begin position="37"/>
        <end position="60"/>
    </location>
</feature>
<feature type="region of interest" description="Disordered" evidence="2">
    <location>
        <begin position="398"/>
        <end position="444"/>
    </location>
</feature>
<feature type="compositionally biased region" description="Polar residues" evidence="2">
    <location>
        <begin position="37"/>
        <end position="52"/>
    </location>
</feature>
<feature type="compositionally biased region" description="Low complexity" evidence="2">
    <location>
        <begin position="406"/>
        <end position="419"/>
    </location>
</feature>
<feature type="compositionally biased region" description="Polar residues" evidence="2">
    <location>
        <begin position="435"/>
        <end position="444"/>
    </location>
</feature>
<gene>
    <name evidence="1" type="primary">mdtA</name>
    <name type="ordered locus">YPA_2286</name>
</gene>
<evidence type="ECO:0000255" key="1">
    <source>
        <dbReference type="HAMAP-Rule" id="MF_01422"/>
    </source>
</evidence>
<evidence type="ECO:0000256" key="2">
    <source>
        <dbReference type="SAM" id="MobiDB-lite"/>
    </source>
</evidence>
<reference key="1">
    <citation type="journal article" date="2006" name="J. Bacteriol.">
        <title>Complete genome sequence of Yersinia pestis strains Antiqua and Nepal516: evidence of gene reduction in an emerging pathogen.</title>
        <authorList>
            <person name="Chain P.S.G."/>
            <person name="Hu P."/>
            <person name="Malfatti S.A."/>
            <person name="Radnedge L."/>
            <person name="Larimer F."/>
            <person name="Vergez L.M."/>
            <person name="Worsham P."/>
            <person name="Chu M.C."/>
            <person name="Andersen G.L."/>
        </authorList>
    </citation>
    <scope>NUCLEOTIDE SEQUENCE [LARGE SCALE GENOMIC DNA]</scope>
    <source>
        <strain>Antiqua</strain>
    </source>
</reference>
<protein>
    <recommendedName>
        <fullName evidence="1">Multidrug resistance protein MdtA</fullName>
    </recommendedName>
    <alternativeName>
        <fullName evidence="1">Multidrug transporter MdtA</fullName>
    </alternativeName>
</protein>
<dbReference type="EMBL" id="CP000308">
    <property type="protein sequence ID" value="ABG14251.1"/>
    <property type="molecule type" value="Genomic_DNA"/>
</dbReference>
<dbReference type="RefSeq" id="WP_002214676.1">
    <property type="nucleotide sequence ID" value="NZ_CP009906.1"/>
</dbReference>
<dbReference type="SMR" id="Q1C5M1"/>
<dbReference type="KEGG" id="ypa:YPA_2286"/>
<dbReference type="Proteomes" id="UP000001971">
    <property type="component" value="Chromosome"/>
</dbReference>
<dbReference type="GO" id="GO:1990281">
    <property type="term" value="C:efflux pump complex"/>
    <property type="evidence" value="ECO:0007669"/>
    <property type="project" value="TreeGrafter"/>
</dbReference>
<dbReference type="GO" id="GO:0005886">
    <property type="term" value="C:plasma membrane"/>
    <property type="evidence" value="ECO:0007669"/>
    <property type="project" value="UniProtKB-SubCell"/>
</dbReference>
<dbReference type="GO" id="GO:0015562">
    <property type="term" value="F:efflux transmembrane transporter activity"/>
    <property type="evidence" value="ECO:0007669"/>
    <property type="project" value="TreeGrafter"/>
</dbReference>
<dbReference type="FunFam" id="2.40.420.20:FF:000001">
    <property type="entry name" value="Efflux RND transporter periplasmic adaptor subunit"/>
    <property type="match status" value="1"/>
</dbReference>
<dbReference type="FunFam" id="1.10.287.470:FF:000005">
    <property type="entry name" value="Multidrug resistance protein MdtA"/>
    <property type="match status" value="1"/>
</dbReference>
<dbReference type="FunFam" id="2.40.30.170:FF:000006">
    <property type="entry name" value="Multidrug resistance protein MdtA"/>
    <property type="match status" value="1"/>
</dbReference>
<dbReference type="Gene3D" id="2.40.30.170">
    <property type="match status" value="1"/>
</dbReference>
<dbReference type="Gene3D" id="2.40.420.20">
    <property type="match status" value="1"/>
</dbReference>
<dbReference type="Gene3D" id="2.40.50.100">
    <property type="match status" value="1"/>
</dbReference>
<dbReference type="Gene3D" id="1.10.287.470">
    <property type="entry name" value="Helix hairpin bin"/>
    <property type="match status" value="1"/>
</dbReference>
<dbReference type="HAMAP" id="MF_01422">
    <property type="entry name" value="MdtA"/>
    <property type="match status" value="1"/>
</dbReference>
<dbReference type="InterPro" id="IPR032317">
    <property type="entry name" value="CusB_D23"/>
</dbReference>
<dbReference type="InterPro" id="IPR022824">
    <property type="entry name" value="Multidrug-R_MdtA"/>
</dbReference>
<dbReference type="InterPro" id="IPR006143">
    <property type="entry name" value="RND_pump_MFP"/>
</dbReference>
<dbReference type="NCBIfam" id="NF008589">
    <property type="entry name" value="PRK11556.1"/>
    <property type="match status" value="1"/>
</dbReference>
<dbReference type="NCBIfam" id="TIGR01730">
    <property type="entry name" value="RND_mfp"/>
    <property type="match status" value="1"/>
</dbReference>
<dbReference type="PANTHER" id="PTHR30469">
    <property type="entry name" value="MULTIDRUG RESISTANCE PROTEIN MDTA"/>
    <property type="match status" value="1"/>
</dbReference>
<dbReference type="PANTHER" id="PTHR30469:SF12">
    <property type="entry name" value="MULTIDRUG RESISTANCE PROTEIN MDTA"/>
    <property type="match status" value="1"/>
</dbReference>
<dbReference type="Pfam" id="PF16576">
    <property type="entry name" value="HlyD_D23"/>
    <property type="match status" value="1"/>
</dbReference>
<dbReference type="SUPFAM" id="SSF111369">
    <property type="entry name" value="HlyD-like secretion proteins"/>
    <property type="match status" value="1"/>
</dbReference>
<name>MDTA_YERPA</name>
<proteinExistence type="inferred from homology"/>
<keyword id="KW-0997">Cell inner membrane</keyword>
<keyword id="KW-1003">Cell membrane</keyword>
<keyword id="KW-0472">Membrane</keyword>
<keyword id="KW-0677">Repeat</keyword>
<keyword id="KW-0732">Signal</keyword>
<keyword id="KW-0813">Transport</keyword>
<accession>Q1C5M1</accession>
<comment type="subunit">
    <text evidence="1">Part of a tripartite efflux system composed of MdtA, MdtB and MdtC.</text>
</comment>
<comment type="subcellular location">
    <subcellularLocation>
        <location evidence="1">Cell inner membrane</location>
        <topology evidence="1">Peripheral membrane protein</topology>
    </subcellularLocation>
</comment>
<comment type="similarity">
    <text evidence="1">Belongs to the membrane fusion protein (MFP) (TC 8.A.1) family.</text>
</comment>
<organism>
    <name type="scientific">Yersinia pestis bv. Antiqua (strain Antiqua)</name>
    <dbReference type="NCBI Taxonomy" id="360102"/>
    <lineage>
        <taxon>Bacteria</taxon>
        <taxon>Pseudomonadati</taxon>
        <taxon>Pseudomonadota</taxon>
        <taxon>Gammaproteobacteria</taxon>
        <taxon>Enterobacterales</taxon>
        <taxon>Yersiniaceae</taxon>
        <taxon>Yersinia</taxon>
    </lineage>
</organism>